<accession>Q9VMD6</accession>
<accession>Q95U56</accession>
<comment type="subcellular location">
    <subcellularLocation>
        <location evidence="5">Mitochondrion</location>
    </subcellularLocation>
</comment>
<comment type="tissue specificity">
    <text evidence="5">Restricted to the developing gut and central nervous system (CNS).</text>
</comment>
<comment type="developmental stage">
    <text evidence="5">Detected from at stage 7, where it is expressed in the early germ band. By stage 11, when the germ band is fully extended, it is expressed strongly in the ventral neuroectoderm, which represents the progenitor of the CNS. At this time, a small region of particularly strong expression is visible at the tip of the extended germ band marking the proctodeum (the primordial hindgut) and expression is also visible in the anterior midgut and the foregut primordial region known as the stomodeum. Expression then persists in both the emerging gut and nervous system during the next three developmental stages (12-14). Strong expression in the primordial midgut is rapidly down-regulated prior to stage 15, by when the presumptive midgut has closed both ventrally and dorsally and is largely established. However, expression persists in the hindgut as it continues to develop by projecting towards the antero-dorsal region of the embryo and is also evident in differentiating components of the foregut, which might include the stomatogastric nervous system. Interestingly, it is expressed strongly throughout the developing CNS and the intensity of this staining is maintained through stage 16 during major periods of developmental reorganization, while expression in regions of the gut is rapidly down-regulated. Expression continues in the CNS late into stage 17, but is also clearly reduced by the end of stage 17 immediately prior to hatching. Expressed during all subsequent developmental stages from first instar larvae through to adulthood.</text>
</comment>
<comment type="RNA editing">
    <location>
        <position position="245" evidence="4 6"/>
    </location>
    <text>Partially edited. Target of Adar.</text>
</comment>
<reference key="1">
    <citation type="journal article" date="2000" name="Science">
        <title>The genome sequence of Drosophila melanogaster.</title>
        <authorList>
            <person name="Adams M.D."/>
            <person name="Celniker S.E."/>
            <person name="Holt R.A."/>
            <person name="Evans C.A."/>
            <person name="Gocayne J.D."/>
            <person name="Amanatides P.G."/>
            <person name="Scherer S.E."/>
            <person name="Li P.W."/>
            <person name="Hoskins R.A."/>
            <person name="Galle R.F."/>
            <person name="George R.A."/>
            <person name="Lewis S.E."/>
            <person name="Richards S."/>
            <person name="Ashburner M."/>
            <person name="Henderson S.N."/>
            <person name="Sutton G.G."/>
            <person name="Wortman J.R."/>
            <person name="Yandell M.D."/>
            <person name="Zhang Q."/>
            <person name="Chen L.X."/>
            <person name="Brandon R.C."/>
            <person name="Rogers Y.-H.C."/>
            <person name="Blazej R.G."/>
            <person name="Champe M."/>
            <person name="Pfeiffer B.D."/>
            <person name="Wan K.H."/>
            <person name="Doyle C."/>
            <person name="Baxter E.G."/>
            <person name="Helt G."/>
            <person name="Nelson C.R."/>
            <person name="Miklos G.L.G."/>
            <person name="Abril J.F."/>
            <person name="Agbayani A."/>
            <person name="An H.-J."/>
            <person name="Andrews-Pfannkoch C."/>
            <person name="Baldwin D."/>
            <person name="Ballew R.M."/>
            <person name="Basu A."/>
            <person name="Baxendale J."/>
            <person name="Bayraktaroglu L."/>
            <person name="Beasley E.M."/>
            <person name="Beeson K.Y."/>
            <person name="Benos P.V."/>
            <person name="Berman B.P."/>
            <person name="Bhandari D."/>
            <person name="Bolshakov S."/>
            <person name="Borkova D."/>
            <person name="Botchan M.R."/>
            <person name="Bouck J."/>
            <person name="Brokstein P."/>
            <person name="Brottier P."/>
            <person name="Burtis K.C."/>
            <person name="Busam D.A."/>
            <person name="Butler H."/>
            <person name="Cadieu E."/>
            <person name="Center A."/>
            <person name="Chandra I."/>
            <person name="Cherry J.M."/>
            <person name="Cawley S."/>
            <person name="Dahlke C."/>
            <person name="Davenport L.B."/>
            <person name="Davies P."/>
            <person name="de Pablos B."/>
            <person name="Delcher A."/>
            <person name="Deng Z."/>
            <person name="Mays A.D."/>
            <person name="Dew I."/>
            <person name="Dietz S.M."/>
            <person name="Dodson K."/>
            <person name="Doup L.E."/>
            <person name="Downes M."/>
            <person name="Dugan-Rocha S."/>
            <person name="Dunkov B.C."/>
            <person name="Dunn P."/>
            <person name="Durbin K.J."/>
            <person name="Evangelista C.C."/>
            <person name="Ferraz C."/>
            <person name="Ferriera S."/>
            <person name="Fleischmann W."/>
            <person name="Fosler C."/>
            <person name="Gabrielian A.E."/>
            <person name="Garg N.S."/>
            <person name="Gelbart W.M."/>
            <person name="Glasser K."/>
            <person name="Glodek A."/>
            <person name="Gong F."/>
            <person name="Gorrell J.H."/>
            <person name="Gu Z."/>
            <person name="Guan P."/>
            <person name="Harris M."/>
            <person name="Harris N.L."/>
            <person name="Harvey D.A."/>
            <person name="Heiman T.J."/>
            <person name="Hernandez J.R."/>
            <person name="Houck J."/>
            <person name="Hostin D."/>
            <person name="Houston K.A."/>
            <person name="Howland T.J."/>
            <person name="Wei M.-H."/>
            <person name="Ibegwam C."/>
            <person name="Jalali M."/>
            <person name="Kalush F."/>
            <person name="Karpen G.H."/>
            <person name="Ke Z."/>
            <person name="Kennison J.A."/>
            <person name="Ketchum K.A."/>
            <person name="Kimmel B.E."/>
            <person name="Kodira C.D."/>
            <person name="Kraft C.L."/>
            <person name="Kravitz S."/>
            <person name="Kulp D."/>
            <person name="Lai Z."/>
            <person name="Lasko P."/>
            <person name="Lei Y."/>
            <person name="Levitsky A.A."/>
            <person name="Li J.H."/>
            <person name="Li Z."/>
            <person name="Liang Y."/>
            <person name="Lin X."/>
            <person name="Liu X."/>
            <person name="Mattei B."/>
            <person name="McIntosh T.C."/>
            <person name="McLeod M.P."/>
            <person name="McPherson D."/>
            <person name="Merkulov G."/>
            <person name="Milshina N.V."/>
            <person name="Mobarry C."/>
            <person name="Morris J."/>
            <person name="Moshrefi A."/>
            <person name="Mount S.M."/>
            <person name="Moy M."/>
            <person name="Murphy B."/>
            <person name="Murphy L."/>
            <person name="Muzny D.M."/>
            <person name="Nelson D.L."/>
            <person name="Nelson D.R."/>
            <person name="Nelson K.A."/>
            <person name="Nixon K."/>
            <person name="Nusskern D.R."/>
            <person name="Pacleb J.M."/>
            <person name="Palazzolo M."/>
            <person name="Pittman G.S."/>
            <person name="Pan S."/>
            <person name="Pollard J."/>
            <person name="Puri V."/>
            <person name="Reese M.G."/>
            <person name="Reinert K."/>
            <person name="Remington K."/>
            <person name="Saunders R.D.C."/>
            <person name="Scheeler F."/>
            <person name="Shen H."/>
            <person name="Shue B.C."/>
            <person name="Siden-Kiamos I."/>
            <person name="Simpson M."/>
            <person name="Skupski M.P."/>
            <person name="Smith T.J."/>
            <person name="Spier E."/>
            <person name="Spradling A.C."/>
            <person name="Stapleton M."/>
            <person name="Strong R."/>
            <person name="Sun E."/>
            <person name="Svirskas R."/>
            <person name="Tector C."/>
            <person name="Turner R."/>
            <person name="Venter E."/>
            <person name="Wang A.H."/>
            <person name="Wang X."/>
            <person name="Wang Z.-Y."/>
            <person name="Wassarman D.A."/>
            <person name="Weinstock G.M."/>
            <person name="Weissenbach J."/>
            <person name="Williams S.M."/>
            <person name="Woodage T."/>
            <person name="Worley K.C."/>
            <person name="Wu D."/>
            <person name="Yang S."/>
            <person name="Yao Q.A."/>
            <person name="Ye J."/>
            <person name="Yeh R.-F."/>
            <person name="Zaveri J.S."/>
            <person name="Zhan M."/>
            <person name="Zhang G."/>
            <person name="Zhao Q."/>
            <person name="Zheng L."/>
            <person name="Zheng X.H."/>
            <person name="Zhong F.N."/>
            <person name="Zhong W."/>
            <person name="Zhou X."/>
            <person name="Zhu S.C."/>
            <person name="Zhu X."/>
            <person name="Smith H.O."/>
            <person name="Gibbs R.A."/>
            <person name="Myers E.W."/>
            <person name="Rubin G.M."/>
            <person name="Venter J.C."/>
        </authorList>
    </citation>
    <scope>NUCLEOTIDE SEQUENCE [LARGE SCALE GENOMIC DNA]</scope>
    <source>
        <strain>Berkeley</strain>
    </source>
</reference>
<reference key="2">
    <citation type="journal article" date="2002" name="Genome Biol.">
        <title>Annotation of the Drosophila melanogaster euchromatic genome: a systematic review.</title>
        <authorList>
            <person name="Misra S."/>
            <person name="Crosby M.A."/>
            <person name="Mungall C.J."/>
            <person name="Matthews B.B."/>
            <person name="Campbell K.S."/>
            <person name="Hradecky P."/>
            <person name="Huang Y."/>
            <person name="Kaminker J.S."/>
            <person name="Millburn G.H."/>
            <person name="Prochnik S.E."/>
            <person name="Smith C.D."/>
            <person name="Tupy J.L."/>
            <person name="Whitfield E.J."/>
            <person name="Bayraktaroglu L."/>
            <person name="Berman B.P."/>
            <person name="Bettencourt B.R."/>
            <person name="Celniker S.E."/>
            <person name="de Grey A.D.N.J."/>
            <person name="Drysdale R.A."/>
            <person name="Harris N.L."/>
            <person name="Richter J."/>
            <person name="Russo S."/>
            <person name="Schroeder A.J."/>
            <person name="Shu S.Q."/>
            <person name="Stapleton M."/>
            <person name="Yamada C."/>
            <person name="Ashburner M."/>
            <person name="Gelbart W.M."/>
            <person name="Rubin G.M."/>
            <person name="Lewis S.E."/>
        </authorList>
    </citation>
    <scope>GENOME REANNOTATION</scope>
    <source>
        <strain>Berkeley</strain>
    </source>
</reference>
<reference key="3">
    <citation type="journal article" date="2002" name="Genome Biol.">
        <title>A Drosophila full-length cDNA resource.</title>
        <authorList>
            <person name="Stapleton M."/>
            <person name="Carlson J.W."/>
            <person name="Brokstein P."/>
            <person name="Yu C."/>
            <person name="Champe M."/>
            <person name="George R.A."/>
            <person name="Guarin H."/>
            <person name="Kronmiller B."/>
            <person name="Pacleb J.M."/>
            <person name="Park S."/>
            <person name="Wan K.H."/>
            <person name="Rubin G.M."/>
            <person name="Celniker S.E."/>
        </authorList>
    </citation>
    <scope>NUCLEOTIDE SEQUENCE [LARGE SCALE MRNA]</scope>
    <scope>RNA EDITING OF POSITION 245</scope>
    <source>
        <strain>Berkeley</strain>
        <tissue>Head</tissue>
    </source>
</reference>
<reference key="4">
    <citation type="journal article" date="2005" name="Dev. Genes Evol.">
        <title>A novel family of mitochondrial proteins is represented by the Drosophila genes slmo, preli-like and real-time.</title>
        <authorList>
            <person name="Dee C.T."/>
            <person name="Moffat K.G."/>
        </authorList>
    </citation>
    <scope>SUBCELLULAR LOCATION</scope>
    <scope>TISSUE SPECIFICITY</scope>
    <scope>DEVELOPMENTAL STAGE</scope>
</reference>
<reference key="5">
    <citation type="journal article" date="2006" name="RNA">
        <title>RNA editing in Drosophila melanogaster: new targets and functional consequences.</title>
        <authorList>
            <person name="Stapleton M."/>
            <person name="Carlson J.W."/>
            <person name="Celniker S.E."/>
        </authorList>
    </citation>
    <scope>RNA EDITING OF POSITION 245</scope>
</reference>
<reference key="6">
    <citation type="journal article" date="2008" name="J. Proteome Res.">
        <title>Phosphoproteome analysis of Drosophila melanogaster embryos.</title>
        <authorList>
            <person name="Zhai B."/>
            <person name="Villen J."/>
            <person name="Beausoleil S.A."/>
            <person name="Mintseris J."/>
            <person name="Gygi S.P."/>
        </authorList>
    </citation>
    <scope>PHOSPHORYLATION [LARGE SCALE ANALYSIS] AT SER-477</scope>
    <scope>IDENTIFICATION BY MASS SPECTROMETRY</scope>
    <source>
        <tissue>Embryo</tissue>
    </source>
</reference>
<feature type="chain" id="PRO_0000210763" description="Protein real-time">
    <location>
        <begin position="1"/>
        <end position="659"/>
    </location>
</feature>
<feature type="domain" description="PRELI/MSF1" evidence="3">
    <location>
        <begin position="3"/>
        <end position="175"/>
    </location>
</feature>
<feature type="domain" description="CRAL-TRIO" evidence="1">
    <location>
        <begin position="286"/>
        <end position="462"/>
    </location>
</feature>
<feature type="domain" description="GOLD" evidence="2">
    <location>
        <begin position="512"/>
        <end position="631"/>
    </location>
</feature>
<feature type="modified residue" description="Phosphoserine" evidence="7">
    <location>
        <position position="477"/>
    </location>
</feature>
<feature type="sequence variant" description="In RNA edited version.">
    <original>Q</original>
    <variation>R</variation>
    <location>
        <position position="245"/>
    </location>
</feature>
<evidence type="ECO:0000255" key="1">
    <source>
        <dbReference type="PROSITE-ProRule" id="PRU00056"/>
    </source>
</evidence>
<evidence type="ECO:0000255" key="2">
    <source>
        <dbReference type="PROSITE-ProRule" id="PRU00096"/>
    </source>
</evidence>
<evidence type="ECO:0000255" key="3">
    <source>
        <dbReference type="PROSITE-ProRule" id="PRU00158"/>
    </source>
</evidence>
<evidence type="ECO:0000269" key="4">
    <source>
    </source>
</evidence>
<evidence type="ECO:0000269" key="5">
    <source>
    </source>
</evidence>
<evidence type="ECO:0000269" key="6">
    <source>
    </source>
</evidence>
<evidence type="ECO:0000269" key="7">
    <source>
    </source>
</evidence>
<sequence length="659" mass="75679">MVQKFQSPVRVYKYPFELVMKAYERRFPTCPQMPIVLDCEVIKDESLEDGAKRNTSRRCKLAVDAPYIFKKLIGVDHVYFLQHNFLDLANRTLSIEAVNESFSSRIEIFERCRYYAHPDNSEWTCFDQSATLDIKNFFGFEHSMEKMGMKQYTQTTLKGKEIIEFFIGQLREEGITHVERWTSPSDATKSPTLDQASDQQHSILLDGDFIARSLGQLSPMQESKLLELRKMLDGVDDLERVPSYQTILRFLAARDWHVSQAYAMLCDSLRWRREHRIDALLAEYSKPAVVVEHFPGGWHHLDKDGRPVYILRLGHMDVKGLLKSLGMDGLLRLALHICEEGIQKINESAERLEKPVLNWSLLVDLEGLSMRHLWRPGIKALLNIIETVERNYPETMGRVLVVRAPRVFPIAWTIVSAFIDEHTRSKFLFYGPDCAHMKDGLAQYLDEEIVPDFLGGPCKTMIHEGGLVPKTLYKMNSLEDHDDEVTAELPTTAAAQALVPGKRLSANQQHDHRNLYKSVDLKAGFAHELLIRNEDPKSVLTWDFDVMRNDLHFTLYRVTQELPEKNDSAVSYFDLQDFVEGVNYFREEPTLICRHKESVQGSHVMHHNDSYLMHWFSPSGAQLNVFYEVLSSANYKGSMTSLQSAFSSNSSAASSVQSR</sequence>
<name>RETM_DROME</name>
<organism>
    <name type="scientific">Drosophila melanogaster</name>
    <name type="common">Fruit fly</name>
    <dbReference type="NCBI Taxonomy" id="7227"/>
    <lineage>
        <taxon>Eukaryota</taxon>
        <taxon>Metazoa</taxon>
        <taxon>Ecdysozoa</taxon>
        <taxon>Arthropoda</taxon>
        <taxon>Hexapoda</taxon>
        <taxon>Insecta</taxon>
        <taxon>Pterygota</taxon>
        <taxon>Neoptera</taxon>
        <taxon>Endopterygota</taxon>
        <taxon>Diptera</taxon>
        <taxon>Brachycera</taxon>
        <taxon>Muscomorpha</taxon>
        <taxon>Ephydroidea</taxon>
        <taxon>Drosophilidae</taxon>
        <taxon>Drosophila</taxon>
        <taxon>Sophophora</taxon>
    </lineage>
</organism>
<proteinExistence type="evidence at protein level"/>
<keyword id="KW-0496">Mitochondrion</keyword>
<keyword id="KW-0597">Phosphoprotein</keyword>
<keyword id="KW-1185">Reference proteome</keyword>
<keyword id="KW-0691">RNA editing</keyword>
<protein>
    <recommendedName>
        <fullName>Protein real-time</fullName>
    </recommendedName>
</protein>
<gene>
    <name type="primary">retm</name>
    <name type="ORF">CG9528</name>
</gene>
<dbReference type="EMBL" id="AE014134">
    <property type="protein sequence ID" value="AAF52383.2"/>
    <property type="molecule type" value="Genomic_DNA"/>
</dbReference>
<dbReference type="EMBL" id="AY058298">
    <property type="protein sequence ID" value="AAL13527.1"/>
    <property type="molecule type" value="mRNA"/>
</dbReference>
<dbReference type="RefSeq" id="NP_001285672.1">
    <property type="nucleotide sequence ID" value="NM_001298743.1"/>
</dbReference>
<dbReference type="RefSeq" id="NP_609028.2">
    <property type="nucleotide sequence ID" value="NM_135184.4"/>
</dbReference>
<dbReference type="SMR" id="Q9VMD6"/>
<dbReference type="BioGRID" id="60056">
    <property type="interactions" value="1"/>
</dbReference>
<dbReference type="FunCoup" id="Q9VMD6">
    <property type="interactions" value="1351"/>
</dbReference>
<dbReference type="STRING" id="7227.FBpp0302983"/>
<dbReference type="iPTMnet" id="Q9VMD6"/>
<dbReference type="PaxDb" id="7227-FBpp0078902"/>
<dbReference type="DNASU" id="33899"/>
<dbReference type="EnsemblMetazoa" id="FBtr0079272">
    <property type="protein sequence ID" value="FBpp0078902"/>
    <property type="gene ID" value="FBgn0031814"/>
</dbReference>
<dbReference type="EnsemblMetazoa" id="FBtr0339788">
    <property type="protein sequence ID" value="FBpp0308835"/>
    <property type="gene ID" value="FBgn0031814"/>
</dbReference>
<dbReference type="GeneID" id="33899"/>
<dbReference type="KEGG" id="dme:Dmel_CG9528"/>
<dbReference type="UCSC" id="CG9528-RA">
    <property type="organism name" value="d. melanogaster"/>
</dbReference>
<dbReference type="AGR" id="FB:FBgn0031814"/>
<dbReference type="CTD" id="33899"/>
<dbReference type="FlyBase" id="FBgn0031814">
    <property type="gene designation" value="retm"/>
</dbReference>
<dbReference type="VEuPathDB" id="VectorBase:FBgn0031814"/>
<dbReference type="eggNOG" id="KOG1471">
    <property type="taxonomic scope" value="Eukaryota"/>
</dbReference>
<dbReference type="GeneTree" id="ENSGT00940000168605"/>
<dbReference type="HOGENOM" id="CLU_023840_0_0_1"/>
<dbReference type="InParanoid" id="Q9VMD6"/>
<dbReference type="OMA" id="AEWTCFD"/>
<dbReference type="OrthoDB" id="30289at2759"/>
<dbReference type="PhylomeDB" id="Q9VMD6"/>
<dbReference type="BioGRID-ORCS" id="33899">
    <property type="hits" value="0 hits in 3 CRISPR screens"/>
</dbReference>
<dbReference type="GenomeRNAi" id="33899"/>
<dbReference type="PRO" id="PR:Q9VMD6"/>
<dbReference type="Proteomes" id="UP000000803">
    <property type="component" value="Chromosome 2L"/>
</dbReference>
<dbReference type="Bgee" id="FBgn0031814">
    <property type="expression patterns" value="Expressed in adult olfactory receptor neuron Or92a (Drosophila) in antenna and 249 other cell types or tissues"/>
</dbReference>
<dbReference type="ExpressionAtlas" id="Q9VMD6">
    <property type="expression patterns" value="baseline and differential"/>
</dbReference>
<dbReference type="GO" id="GO:0005737">
    <property type="term" value="C:cytoplasm"/>
    <property type="evidence" value="ECO:0000318"/>
    <property type="project" value="GO_Central"/>
</dbReference>
<dbReference type="GO" id="GO:0005739">
    <property type="term" value="C:mitochondrion"/>
    <property type="evidence" value="ECO:0000314"/>
    <property type="project" value="UniProtKB"/>
</dbReference>
<dbReference type="CDD" id="cd00170">
    <property type="entry name" value="SEC14"/>
    <property type="match status" value="1"/>
</dbReference>
<dbReference type="FunFam" id="2.60.120.680:FF:000009">
    <property type="entry name" value="Blast:Protein real-time"/>
    <property type="match status" value="1"/>
</dbReference>
<dbReference type="FunFam" id="3.40.525.10:FF:000006">
    <property type="entry name" value="SEC14-like lipid binding 1"/>
    <property type="match status" value="1"/>
</dbReference>
<dbReference type="Gene3D" id="3.40.525.10">
    <property type="entry name" value="CRAL-TRIO lipid binding domain"/>
    <property type="match status" value="1"/>
</dbReference>
<dbReference type="Gene3D" id="2.60.120.680">
    <property type="entry name" value="GOLD domain"/>
    <property type="match status" value="1"/>
</dbReference>
<dbReference type="InterPro" id="IPR001251">
    <property type="entry name" value="CRAL-TRIO_dom"/>
</dbReference>
<dbReference type="InterPro" id="IPR036865">
    <property type="entry name" value="CRAL-TRIO_dom_sf"/>
</dbReference>
<dbReference type="InterPro" id="IPR011074">
    <property type="entry name" value="CRAL/TRIO_N_dom"/>
</dbReference>
<dbReference type="InterPro" id="IPR036273">
    <property type="entry name" value="CRAL/TRIO_N_dom_sf"/>
</dbReference>
<dbReference type="InterPro" id="IPR009038">
    <property type="entry name" value="GOLD_dom"/>
</dbReference>
<dbReference type="InterPro" id="IPR036598">
    <property type="entry name" value="GOLD_dom_sf"/>
</dbReference>
<dbReference type="InterPro" id="IPR006797">
    <property type="entry name" value="PRELI/MSF1_dom"/>
</dbReference>
<dbReference type="InterPro" id="IPR051064">
    <property type="entry name" value="SEC14/CRAL-TRIO_domain"/>
</dbReference>
<dbReference type="PANTHER" id="PTHR23324:SF66">
    <property type="entry name" value="PROTEIN REAL-TIME"/>
    <property type="match status" value="1"/>
</dbReference>
<dbReference type="PANTHER" id="PTHR23324">
    <property type="entry name" value="SEC14 RELATED PROTEIN"/>
    <property type="match status" value="1"/>
</dbReference>
<dbReference type="Pfam" id="PF00650">
    <property type="entry name" value="CRAL_TRIO"/>
    <property type="match status" value="1"/>
</dbReference>
<dbReference type="Pfam" id="PF03765">
    <property type="entry name" value="CRAL_TRIO_N"/>
    <property type="match status" value="1"/>
</dbReference>
<dbReference type="Pfam" id="PF04707">
    <property type="entry name" value="PRELI"/>
    <property type="match status" value="1"/>
</dbReference>
<dbReference type="SMART" id="SM01100">
    <property type="entry name" value="CRAL_TRIO_N"/>
    <property type="match status" value="1"/>
</dbReference>
<dbReference type="SMART" id="SM00516">
    <property type="entry name" value="SEC14"/>
    <property type="match status" value="1"/>
</dbReference>
<dbReference type="SUPFAM" id="SSF52087">
    <property type="entry name" value="CRAL/TRIO domain"/>
    <property type="match status" value="1"/>
</dbReference>
<dbReference type="SUPFAM" id="SSF46938">
    <property type="entry name" value="CRAL/TRIO N-terminal domain"/>
    <property type="match status" value="1"/>
</dbReference>
<dbReference type="SUPFAM" id="SSF101576">
    <property type="entry name" value="Supernatant protein factor (SPF), C-terminal domain"/>
    <property type="match status" value="1"/>
</dbReference>
<dbReference type="PROSITE" id="PS50191">
    <property type="entry name" value="CRAL_TRIO"/>
    <property type="match status" value="1"/>
</dbReference>
<dbReference type="PROSITE" id="PS50866">
    <property type="entry name" value="GOLD"/>
    <property type="match status" value="1"/>
</dbReference>
<dbReference type="PROSITE" id="PS50904">
    <property type="entry name" value="PRELI_MSF1"/>
    <property type="match status" value="1"/>
</dbReference>